<comment type="function">
    <text evidence="3">Component of the ERLIN1/ERLIN2 complex which mediates the endoplasmic reticulum-associated degradation (ERAD) of inositol 1,4,5-trisphosphate receptors (IP3Rs) such as ITPR1. Promotes sterol-accelerated ERAD of HMGCR probably implicating an AMFR/gp78-containing ubiquitin ligase complex. Involved in regulation of cellular cholesterol homeostasis by regulation the SREBP signaling pathway. May promote ER retention of the SCAP-SREBF complex (By similarity).</text>
</comment>
<comment type="subunit">
    <text evidence="3 4">Forms a heteromeric complex with ERLIN1. In complex with ERLIN1, interacts with RNF170. Interacts with activated ITPR1, independently of the degree of ITPR1 polyubiquitination. Interacts with SCAP, INSIG1, SREBF1 and SREBF2 under cholesterol sufficiency conditions; indicative for an association with the SCAP-SREBP-INSIG complex. Probably part of an AMFR/gp78 and INSIG1-containing ubiquitin ligase complex involved in ERAD of HMGCR. Interacts with TMUB1; TMUB1 bridges the association with AMFR. Interacts with SYVN1 and RNF139. Interacts with TMEM259 (By similarity). Interacts with TMEM41B (By similarity).</text>
</comment>
<comment type="subcellular location">
    <subcellularLocation>
        <location evidence="1">Endoplasmic reticulum membrane</location>
        <topology evidence="1">Single-pass type II membrane protein</topology>
    </subcellularLocation>
    <text evidence="1">Associated with lipid raft-like domains of the endoplasmic reticulum membrane.</text>
</comment>
<comment type="PTM">
    <text evidence="2">Deubiquitinated by USP25; leading to stabilization.</text>
</comment>
<comment type="similarity">
    <text evidence="6">Belongs to the band 7/mec-2 family.</text>
</comment>
<gene>
    <name type="primary">ERLIN2</name>
    <name type="synonym">SPFH2</name>
</gene>
<proteinExistence type="evidence at transcript level"/>
<protein>
    <recommendedName>
        <fullName>Erlin-2</fullName>
    </recommendedName>
    <alternativeName>
        <fullName>Endoplasmic reticulum lipid raft-associated protein 2</fullName>
    </alternativeName>
    <alternativeName>
        <fullName>Stomatin-prohibitin-flotillin-HflC/K domain-containing protein 2</fullName>
        <shortName>SPFH domain-containing protein 2</shortName>
    </alternativeName>
</protein>
<accession>Q1RMU4</accession>
<keyword id="KW-0007">Acetylation</keyword>
<keyword id="KW-0153">Cholesterol metabolism</keyword>
<keyword id="KW-0256">Endoplasmic reticulum</keyword>
<keyword id="KW-0325">Glycoprotein</keyword>
<keyword id="KW-0443">Lipid metabolism</keyword>
<keyword id="KW-0472">Membrane</keyword>
<keyword id="KW-1185">Reference proteome</keyword>
<keyword id="KW-0735">Signal-anchor</keyword>
<keyword id="KW-0753">Steroid metabolism</keyword>
<keyword id="KW-1207">Sterol metabolism</keyword>
<keyword id="KW-0812">Transmembrane</keyword>
<keyword id="KW-1133">Transmembrane helix</keyword>
<sequence>MAQLGAVVAVAASFFCASLFSAVHKIEEGHIGVYYRGGALLTSTSGPGFHLMLPFITSYKSVQTTLQTDEVKNVPCGTSGGVMIYFDRIEVVNFLVPHAVYDIVKNYTADYDKALIFNKIHHELNQFCSVHTLQEVYIELFDQIDENLKLALQQDLTSMAPGLVIQAVRVTKPNIPEAIRRNYELMESEKTKLLIAAQKQKVVEKEAETERKKALIEAEKVAQVAEITFGQKVMEKETEKRISEIEDAAFLAREKAKADAECYTAMKIAEANKLKLTPEYLQLMKYKAIASNSKIYFGKDIPNMFMDSAGGVGKQFEGLADKLSFVLEDEPMEADSEN</sequence>
<name>ERLN2_BOVIN</name>
<dbReference type="EMBL" id="BC114707">
    <property type="protein sequence ID" value="AAI14708.1"/>
    <property type="molecule type" value="mRNA"/>
</dbReference>
<dbReference type="RefSeq" id="NP_001040041.1">
    <property type="nucleotide sequence ID" value="NM_001046576.1"/>
</dbReference>
<dbReference type="RefSeq" id="XP_005226183.1">
    <property type="nucleotide sequence ID" value="XM_005226126.5"/>
</dbReference>
<dbReference type="BioGRID" id="543878">
    <property type="interactions" value="1"/>
</dbReference>
<dbReference type="FunCoup" id="Q1RMU4">
    <property type="interactions" value="2666"/>
</dbReference>
<dbReference type="STRING" id="9913.ENSBTAP00000066190"/>
<dbReference type="GlyCosmos" id="Q1RMU4">
    <property type="glycosylation" value="1 site, No reported glycans"/>
</dbReference>
<dbReference type="GlyGen" id="Q1RMU4">
    <property type="glycosylation" value="1 site"/>
</dbReference>
<dbReference type="PaxDb" id="9913-ENSBTAP00000039591"/>
<dbReference type="Ensembl" id="ENSBTAT00000039803.3">
    <property type="protein sequence ID" value="ENSBTAP00000039591.2"/>
    <property type="gene ID" value="ENSBTAG00000017831.5"/>
</dbReference>
<dbReference type="GeneID" id="616278"/>
<dbReference type="KEGG" id="bta:616278"/>
<dbReference type="CTD" id="11160"/>
<dbReference type="VEuPathDB" id="HostDB:ENSBTAG00000017831"/>
<dbReference type="VGNC" id="VGNC:28589">
    <property type="gene designation" value="ERLIN2"/>
</dbReference>
<dbReference type="eggNOG" id="KOG2962">
    <property type="taxonomic scope" value="Eukaryota"/>
</dbReference>
<dbReference type="GeneTree" id="ENSGT00390000014666"/>
<dbReference type="HOGENOM" id="CLU_058701_0_0_1"/>
<dbReference type="InParanoid" id="Q1RMU4"/>
<dbReference type="OMA" id="YNMVRNF"/>
<dbReference type="OrthoDB" id="77368at2759"/>
<dbReference type="TreeFam" id="TF313059"/>
<dbReference type="Reactome" id="R-BTA-382556">
    <property type="pathway name" value="ABC-family proteins mediated transport"/>
</dbReference>
<dbReference type="Proteomes" id="UP000009136">
    <property type="component" value="Chromosome 27"/>
</dbReference>
<dbReference type="Bgee" id="ENSBTAG00000017831">
    <property type="expression patterns" value="Expressed in caput epididymis and 108 other cell types or tissues"/>
</dbReference>
<dbReference type="GO" id="GO:0005789">
    <property type="term" value="C:endoplasmic reticulum membrane"/>
    <property type="evidence" value="ECO:0000318"/>
    <property type="project" value="GO_Central"/>
</dbReference>
<dbReference type="GO" id="GO:0015485">
    <property type="term" value="F:cholesterol binding"/>
    <property type="evidence" value="ECO:0000318"/>
    <property type="project" value="GO_Central"/>
</dbReference>
<dbReference type="GO" id="GO:0031625">
    <property type="term" value="F:ubiquitin protein ligase binding"/>
    <property type="evidence" value="ECO:0007669"/>
    <property type="project" value="InterPro"/>
</dbReference>
<dbReference type="GO" id="GO:0008203">
    <property type="term" value="P:cholesterol metabolic process"/>
    <property type="evidence" value="ECO:0007669"/>
    <property type="project" value="UniProtKB-KW"/>
</dbReference>
<dbReference type="GO" id="GO:0032933">
    <property type="term" value="P:SREBP signaling pathway"/>
    <property type="evidence" value="ECO:0000318"/>
    <property type="project" value="GO_Central"/>
</dbReference>
<dbReference type="CDD" id="cd03406">
    <property type="entry name" value="SPFH_like_u3"/>
    <property type="match status" value="1"/>
</dbReference>
<dbReference type="FunFam" id="3.30.479.30:FF:000009">
    <property type="entry name" value="Erlin-2 isoform 1"/>
    <property type="match status" value="1"/>
</dbReference>
<dbReference type="Gene3D" id="3.30.479.30">
    <property type="entry name" value="Band 7 domain"/>
    <property type="match status" value="1"/>
</dbReference>
<dbReference type="InterPro" id="IPR001107">
    <property type="entry name" value="Band_7"/>
</dbReference>
<dbReference type="InterPro" id="IPR036013">
    <property type="entry name" value="Band_7/SPFH_dom_sf"/>
</dbReference>
<dbReference type="InterPro" id="IPR033294">
    <property type="entry name" value="Erlin1/2"/>
</dbReference>
<dbReference type="PANTHER" id="PTHR15351">
    <property type="entry name" value="ERLIN (ER LIPID RAFT ASSOCIATED PROTEIN) HOMOLOG"/>
    <property type="match status" value="1"/>
</dbReference>
<dbReference type="PANTHER" id="PTHR15351:SF4">
    <property type="entry name" value="ERLIN-2"/>
    <property type="match status" value="1"/>
</dbReference>
<dbReference type="Pfam" id="PF01145">
    <property type="entry name" value="Band_7"/>
    <property type="match status" value="1"/>
</dbReference>
<dbReference type="SMART" id="SM00244">
    <property type="entry name" value="PHB"/>
    <property type="match status" value="1"/>
</dbReference>
<evidence type="ECO:0000250" key="1"/>
<evidence type="ECO:0000250" key="2">
    <source>
        <dbReference type="UniProtKB" id="O75477"/>
    </source>
</evidence>
<evidence type="ECO:0000250" key="3">
    <source>
        <dbReference type="UniProtKB" id="O94905"/>
    </source>
</evidence>
<evidence type="ECO:0000250" key="4">
    <source>
        <dbReference type="UniProtKB" id="Q8BFZ9"/>
    </source>
</evidence>
<evidence type="ECO:0000255" key="5"/>
<evidence type="ECO:0000305" key="6"/>
<reference key="1">
    <citation type="submission" date="2006-04" db="EMBL/GenBank/DDBJ databases">
        <authorList>
            <consortium name="NIH - Mammalian Gene Collection (MGC) project"/>
        </authorList>
    </citation>
    <scope>NUCLEOTIDE SEQUENCE [LARGE SCALE MRNA]</scope>
    <source>
        <strain>Hereford</strain>
        <tissue>Uterus</tissue>
    </source>
</reference>
<organism>
    <name type="scientific">Bos taurus</name>
    <name type="common">Bovine</name>
    <dbReference type="NCBI Taxonomy" id="9913"/>
    <lineage>
        <taxon>Eukaryota</taxon>
        <taxon>Metazoa</taxon>
        <taxon>Chordata</taxon>
        <taxon>Craniata</taxon>
        <taxon>Vertebrata</taxon>
        <taxon>Euteleostomi</taxon>
        <taxon>Mammalia</taxon>
        <taxon>Eutheria</taxon>
        <taxon>Laurasiatheria</taxon>
        <taxon>Artiodactyla</taxon>
        <taxon>Ruminantia</taxon>
        <taxon>Pecora</taxon>
        <taxon>Bovidae</taxon>
        <taxon>Bovinae</taxon>
        <taxon>Bos</taxon>
    </lineage>
</organism>
<feature type="chain" id="PRO_0000288559" description="Erlin-2">
    <location>
        <begin position="1"/>
        <end position="338"/>
    </location>
</feature>
<feature type="topological domain" description="Cytoplasmic" evidence="5">
    <location>
        <begin position="1"/>
        <end position="3"/>
    </location>
</feature>
<feature type="transmembrane region" description="Helical" evidence="5">
    <location>
        <begin position="4"/>
        <end position="24"/>
    </location>
</feature>
<feature type="topological domain" description="Lumenal" evidence="5">
    <location>
        <begin position="25"/>
        <end position="338"/>
    </location>
</feature>
<feature type="region of interest" description="Interaction with ERLIN1" evidence="1">
    <location>
        <begin position="177"/>
        <end position="309"/>
    </location>
</feature>
<feature type="modified residue" description="N6-acetyllysine" evidence="2">
    <location>
        <position position="267"/>
    </location>
</feature>
<feature type="glycosylation site" description="N-linked (GlcNAc...) asparagine" evidence="5">
    <location>
        <position position="106"/>
    </location>
</feature>